<feature type="signal peptide" evidence="2">
    <location>
        <begin position="1"/>
        <end position="21"/>
    </location>
</feature>
<feature type="chain" id="PRO_0000016746" description="Discoidin domain-containing receptor 2">
    <location>
        <begin position="22"/>
        <end position="855"/>
    </location>
</feature>
<feature type="topological domain" description="Extracellular" evidence="2">
    <location>
        <begin position="22"/>
        <end position="399"/>
    </location>
</feature>
<feature type="transmembrane region" description="Helical" evidence="2">
    <location>
        <begin position="400"/>
        <end position="421"/>
    </location>
</feature>
<feature type="topological domain" description="Cytoplasmic" evidence="2">
    <location>
        <begin position="422"/>
        <end position="855"/>
    </location>
</feature>
<feature type="domain" description="F5/8 type C" evidence="3">
    <location>
        <begin position="30"/>
        <end position="185"/>
    </location>
</feature>
<feature type="domain" description="Protein kinase" evidence="4">
    <location>
        <begin position="563"/>
        <end position="849"/>
    </location>
</feature>
<feature type="region of interest" description="Disordered" evidence="6">
    <location>
        <begin position="452"/>
        <end position="471"/>
    </location>
</feature>
<feature type="active site" description="Proton acceptor" evidence="4 5">
    <location>
        <position position="710"/>
    </location>
</feature>
<feature type="binding site" evidence="4">
    <location>
        <begin position="569"/>
        <end position="577"/>
    </location>
    <ligand>
        <name>ATP</name>
        <dbReference type="ChEBI" id="CHEBI:30616"/>
    </ligand>
</feature>
<feature type="binding site" evidence="23">
    <location>
        <position position="608"/>
    </location>
    <ligand>
        <name>ATP</name>
        <dbReference type="ChEBI" id="CHEBI:30616"/>
    </ligand>
</feature>
<feature type="modified residue" description="Phosphotyrosine; by SRC and autocatalysis" evidence="1">
    <location>
        <position position="471"/>
    </location>
</feature>
<feature type="modified residue" description="Phosphotyrosine; by SRC and autocatalysis" evidence="9">
    <location>
        <position position="736"/>
    </location>
</feature>
<feature type="modified residue" description="Phosphotyrosine; by SRC and autocatalysis" evidence="9">
    <location>
        <position position="740"/>
    </location>
</feature>
<feature type="modified residue" description="Phosphotyrosine; by SRC and autocatalysis" evidence="9">
    <location>
        <position position="741"/>
    </location>
</feature>
<feature type="glycosylation site" description="N-linked (GlcNAc...) asparagine" evidence="2">
    <location>
        <position position="121"/>
    </location>
</feature>
<feature type="glycosylation site" description="N-linked (GlcNAc...) asparagine" evidence="2">
    <location>
        <position position="213"/>
    </location>
</feature>
<feature type="glycosylation site" description="N-linked (GlcNAc...) asparagine" evidence="2">
    <location>
        <position position="261"/>
    </location>
</feature>
<feature type="glycosylation site" description="N-linked (GlcNAc...) asparagine" evidence="2">
    <location>
        <position position="280"/>
    </location>
</feature>
<feature type="glycosylation site" description="N-linked (GlcNAc...) asparagine" evidence="2">
    <location>
        <position position="372"/>
    </location>
</feature>
<feature type="disulfide bond">
    <location>
        <begin position="30"/>
        <end position="185"/>
    </location>
</feature>
<feature type="disulfide bond">
    <location>
        <begin position="73"/>
        <end position="177"/>
    </location>
</feature>
<feature type="sequence variant" id="VAR_041498" description="In a lung large cell carcinoma sample; somatic mutation." evidence="7 10">
    <original>R</original>
    <variation>S</variation>
    <location>
        <position position="105"/>
    </location>
</feature>
<feature type="sequence variant" id="VAR_065719" description="In SEMD-SL; abolishes collagen binding; dbSNP:rs397514747." evidence="16">
    <original>E</original>
    <variation>K</variation>
    <location>
        <position position="113"/>
    </location>
</feature>
<feature type="sequence variant" id="VAR_075417" description="In SEMD-SL." evidence="19">
    <original>R</original>
    <variation>W</variation>
    <location>
        <position position="124"/>
    </location>
</feature>
<feature type="sequence variant" id="VAR_041499" description="In dbSNP:rs34722354." evidence="10">
    <original>M</original>
    <variation>I</variation>
    <location>
        <position position="441"/>
    </location>
</feature>
<feature type="sequence variant" id="VAR_041500" description="In dbSNP:rs34869543." evidence="10">
    <original>R</original>
    <variation>C</variation>
    <location>
        <position position="478"/>
    </location>
</feature>
<feature type="sequence variant" id="VAR_041501" description="In dbSNP:rs55973200." evidence="10">
    <original>V</original>
    <variation>F</variation>
    <location>
        <position position="543"/>
    </location>
</feature>
<feature type="sequence variant" id="VAR_081931" description="In WRCN; increased autophosphorylation in patient fibroblasts." evidence="20">
    <original>L</original>
    <variation>P</variation>
    <location>
        <position position="610"/>
    </location>
</feature>
<feature type="sequence variant" id="VAR_063050" description="In SEMD-SL; causes retention in an intracellular compartment and thereby abolishes signaling in response collagen binding; dbSNP:rs121964865." evidence="14 16">
    <original>T</original>
    <variation>I</variation>
    <location>
        <position position="713"/>
    </location>
</feature>
<feature type="sequence variant" id="VAR_063051" description="In SEMD-SL; causes retention in an intracellular compartment and thereby abolishes signaling in response collagen binding; dbSNP:rs121964864." evidence="14 16">
    <original>I</original>
    <variation>R</variation>
    <location>
        <position position="726"/>
    </location>
</feature>
<feature type="sequence variant" id="VAR_081932" description="In WRCN; increased autophosphorylation in patient fibroblasts." evidence="20">
    <original>Y</original>
    <variation>C</variation>
    <location>
        <position position="740"/>
    </location>
</feature>
<feature type="sequence variant" id="VAR_063052" description="In SEMD-SL; causes retention in an intracellular compartment and thereby abolishes signaling in response collagen binding; dbSNP:rs121964863." evidence="14 16">
    <original>R</original>
    <variation>C</variation>
    <location>
        <position position="752"/>
    </location>
</feature>
<feature type="mutagenesis site" description="Abolishes collagen binding." evidence="15 16">
    <original>W</original>
    <variation>A</variation>
    <location>
        <position position="52"/>
    </location>
</feature>
<feature type="mutagenesis site" description="Abolishes kinase activity." evidence="9">
    <original>K</original>
    <variation>A</variation>
    <location>
        <position position="608"/>
    </location>
</feature>
<feature type="mutagenesis site" description="Reduces autophosphorylation. Abolishes phosphorylation by SRC; when associated with F-740 and F-741." evidence="9">
    <original>Y</original>
    <variation>F</variation>
    <location>
        <position position="736"/>
    </location>
</feature>
<feature type="mutagenesis site" description="Promotes autophosphorylation. Abolishes phosphorylation by SRC; when associated with F-736 and F-741." evidence="9">
    <original>Y</original>
    <variation>F</variation>
    <location>
        <position position="740"/>
    </location>
</feature>
<feature type="mutagenesis site" description="Reduces autophosphorylation. Abolishes phosphorylation by SRC; when associated with F-736 and F-740." evidence="9">
    <original>Y</original>
    <variation>F</variation>
    <location>
        <position position="741"/>
    </location>
</feature>
<feature type="sequence conflict" description="In Ref. 1; CAA52777." evidence="23" ref="1">
    <original>A</original>
    <variation>S</variation>
    <location>
        <position position="642"/>
    </location>
</feature>
<feature type="turn" evidence="24">
    <location>
        <begin position="27"/>
        <end position="29"/>
    </location>
</feature>
<feature type="strand" evidence="25">
    <location>
        <begin position="33"/>
        <end position="35"/>
    </location>
</feature>
<feature type="turn" evidence="24">
    <location>
        <begin position="36"/>
        <end position="38"/>
    </location>
</feature>
<feature type="strand" evidence="24">
    <location>
        <begin position="39"/>
        <end position="41"/>
    </location>
</feature>
<feature type="helix" evidence="24">
    <location>
        <begin position="43"/>
        <end position="45"/>
    </location>
</feature>
<feature type="strand" evidence="24">
    <location>
        <begin position="46"/>
        <end position="49"/>
    </location>
</feature>
<feature type="helix" evidence="24">
    <location>
        <begin position="54"/>
        <end position="56"/>
    </location>
</feature>
<feature type="helix" evidence="24">
    <location>
        <begin position="58"/>
        <end position="60"/>
    </location>
</feature>
<feature type="strand" evidence="24">
    <location>
        <begin position="70"/>
        <end position="72"/>
    </location>
</feature>
<feature type="strand" evidence="24">
    <location>
        <begin position="87"/>
        <end position="103"/>
    </location>
</feature>
<feature type="helix" evidence="24">
    <location>
        <begin position="107"/>
        <end position="109"/>
    </location>
</feature>
<feature type="strand" evidence="24">
    <location>
        <begin position="116"/>
        <end position="128"/>
    </location>
</feature>
<feature type="strand" evidence="27">
    <location>
        <begin position="135"/>
        <end position="137"/>
    </location>
</feature>
<feature type="strand" evidence="27">
    <location>
        <begin position="140"/>
        <end position="142"/>
    </location>
</feature>
<feature type="strand" evidence="24">
    <location>
        <begin position="145"/>
        <end position="149"/>
    </location>
</feature>
<feature type="strand" evidence="24">
    <location>
        <begin position="151"/>
        <end position="169"/>
    </location>
</feature>
<feature type="strand" evidence="27">
    <location>
        <begin position="171"/>
        <end position="174"/>
    </location>
</feature>
<feature type="strand" evidence="24">
    <location>
        <begin position="178"/>
        <end position="186"/>
    </location>
</feature>
<feature type="helix" evidence="26">
    <location>
        <begin position="560"/>
        <end position="562"/>
    </location>
</feature>
<feature type="strand" evidence="26">
    <location>
        <begin position="565"/>
        <end position="571"/>
    </location>
</feature>
<feature type="strand" evidence="26">
    <location>
        <begin position="576"/>
        <end position="581"/>
    </location>
</feature>
<feature type="strand" evidence="26">
    <location>
        <begin position="604"/>
        <end position="609"/>
    </location>
</feature>
<feature type="helix" evidence="26">
    <location>
        <begin position="616"/>
        <end position="630"/>
    </location>
</feature>
<feature type="strand" evidence="26">
    <location>
        <begin position="642"/>
        <end position="644"/>
    </location>
</feature>
<feature type="strand" evidence="26">
    <location>
        <begin position="646"/>
        <end position="649"/>
    </location>
</feature>
<feature type="strand" evidence="26">
    <location>
        <begin position="651"/>
        <end position="655"/>
    </location>
</feature>
<feature type="helix" evidence="26">
    <location>
        <begin position="662"/>
        <end position="667"/>
    </location>
</feature>
<feature type="helix" evidence="26">
    <location>
        <begin position="684"/>
        <end position="703"/>
    </location>
</feature>
<feature type="helix" evidence="26">
    <location>
        <begin position="713"/>
        <end position="715"/>
    </location>
</feature>
<feature type="strand" evidence="26">
    <location>
        <begin position="716"/>
        <end position="718"/>
    </location>
</feature>
<feature type="helix" evidence="26">
    <location>
        <begin position="720"/>
        <end position="722"/>
    </location>
</feature>
<feature type="strand" evidence="26">
    <location>
        <begin position="724"/>
        <end position="726"/>
    </location>
</feature>
<feature type="helix" evidence="26">
    <location>
        <begin position="734"/>
        <end position="739"/>
    </location>
</feature>
<feature type="strand" evidence="26">
    <location>
        <begin position="744"/>
        <end position="746"/>
    </location>
</feature>
<feature type="turn" evidence="26">
    <location>
        <begin position="751"/>
        <end position="753"/>
    </location>
</feature>
<feature type="helix" evidence="26">
    <location>
        <begin position="756"/>
        <end position="759"/>
    </location>
</feature>
<feature type="helix" evidence="26">
    <location>
        <begin position="766"/>
        <end position="782"/>
    </location>
</feature>
<feature type="turn" evidence="26">
    <location>
        <begin position="788"/>
        <end position="791"/>
    </location>
</feature>
<feature type="helix" evidence="26">
    <location>
        <begin position="794"/>
        <end position="806"/>
    </location>
</feature>
<feature type="strand" evidence="26">
    <location>
        <begin position="818"/>
        <end position="820"/>
    </location>
</feature>
<feature type="helix" evidence="26">
    <location>
        <begin position="822"/>
        <end position="831"/>
    </location>
</feature>
<feature type="helix" evidence="26">
    <location>
        <begin position="836"/>
        <end position="838"/>
    </location>
</feature>
<feature type="helix" evidence="26">
    <location>
        <begin position="842"/>
        <end position="849"/>
    </location>
</feature>
<dbReference type="EC" id="2.7.10.1"/>
<dbReference type="EMBL" id="X74764">
    <property type="protein sequence ID" value="CAA52777.1"/>
    <property type="molecule type" value="mRNA"/>
</dbReference>
<dbReference type="EMBL" id="AK314388">
    <property type="protein sequence ID" value="BAG37013.1"/>
    <property type="molecule type" value="mRNA"/>
</dbReference>
<dbReference type="EMBL" id="AK095975">
    <property type="protein sequence ID" value="BAG53183.1"/>
    <property type="molecule type" value="mRNA"/>
</dbReference>
<dbReference type="EMBL" id="AL445197">
    <property type="status" value="NOT_ANNOTATED_CDS"/>
    <property type="molecule type" value="Genomic_DNA"/>
</dbReference>
<dbReference type="EMBL" id="CH471067">
    <property type="protein sequence ID" value="EAW90713.1"/>
    <property type="molecule type" value="Genomic_DNA"/>
</dbReference>
<dbReference type="EMBL" id="BC052998">
    <property type="protein sequence ID" value="AAH52998.1"/>
    <property type="molecule type" value="mRNA"/>
</dbReference>
<dbReference type="CCDS" id="CCDS1241.1"/>
<dbReference type="PIR" id="S42621">
    <property type="entry name" value="S42621"/>
</dbReference>
<dbReference type="RefSeq" id="NP_001014796.1">
    <property type="nucleotide sequence ID" value="NM_001014796.3"/>
</dbReference>
<dbReference type="RefSeq" id="NP_001341911.1">
    <property type="nucleotide sequence ID" value="NM_001354982.2"/>
</dbReference>
<dbReference type="RefSeq" id="NP_001341912.1">
    <property type="nucleotide sequence ID" value="NM_001354983.2"/>
</dbReference>
<dbReference type="RefSeq" id="NP_006173.2">
    <property type="nucleotide sequence ID" value="NM_006182.4"/>
</dbReference>
<dbReference type="RefSeq" id="XP_006711407.1">
    <property type="nucleotide sequence ID" value="XM_006711344.3"/>
</dbReference>
<dbReference type="RefSeq" id="XP_011507888.1">
    <property type="nucleotide sequence ID" value="XM_011509586.2"/>
</dbReference>
<dbReference type="RefSeq" id="XP_011507889.1">
    <property type="nucleotide sequence ID" value="XM_011509587.3"/>
</dbReference>
<dbReference type="RefSeq" id="XP_047277510.1">
    <property type="nucleotide sequence ID" value="XM_047421554.1"/>
</dbReference>
<dbReference type="RefSeq" id="XP_054192777.1">
    <property type="nucleotide sequence ID" value="XM_054336802.1"/>
</dbReference>
<dbReference type="RefSeq" id="XP_054192778.1">
    <property type="nucleotide sequence ID" value="XM_054336803.1"/>
</dbReference>
<dbReference type="PDB" id="2WUH">
    <property type="method" value="X-ray"/>
    <property type="resolution" value="1.60 A"/>
    <property type="chains" value="A=26-190"/>
</dbReference>
<dbReference type="PDB" id="2Z4F">
    <property type="method" value="NMR"/>
    <property type="chains" value="A=26-186"/>
</dbReference>
<dbReference type="PDB" id="6FER">
    <property type="method" value="X-ray"/>
    <property type="resolution" value="2.87 A"/>
    <property type="chains" value="A/B/C/D/E/F/G/H/I/J/K/L=553-855"/>
</dbReference>
<dbReference type="PDB" id="7AZB">
    <property type="method" value="X-ray"/>
    <property type="resolution" value="2.62 A"/>
    <property type="chains" value="A=26-190"/>
</dbReference>
<dbReference type="PDBsum" id="2WUH"/>
<dbReference type="PDBsum" id="2Z4F"/>
<dbReference type="PDBsum" id="6FER"/>
<dbReference type="PDBsum" id="7AZB"/>
<dbReference type="BMRB" id="Q16832"/>
<dbReference type="SMR" id="Q16832"/>
<dbReference type="BioGRID" id="110975">
    <property type="interactions" value="133"/>
</dbReference>
<dbReference type="DIP" id="DIP-39699N"/>
<dbReference type="FunCoup" id="Q16832">
    <property type="interactions" value="58"/>
</dbReference>
<dbReference type="IntAct" id="Q16832">
    <property type="interactions" value="122"/>
</dbReference>
<dbReference type="MINT" id="Q16832"/>
<dbReference type="STRING" id="9606.ENSP00000356899"/>
<dbReference type="BindingDB" id="Q16832"/>
<dbReference type="ChEMBL" id="CHEMBL5122"/>
<dbReference type="DrugBank" id="DB12010">
    <property type="generic name" value="Fostamatinib"/>
</dbReference>
<dbReference type="DrugBank" id="DB00619">
    <property type="generic name" value="Imatinib"/>
</dbReference>
<dbReference type="DrugBank" id="DB08896">
    <property type="generic name" value="Regorafenib"/>
</dbReference>
<dbReference type="DrugCentral" id="Q16832"/>
<dbReference type="GuidetoPHARMACOLOGY" id="1844"/>
<dbReference type="GlyCosmos" id="Q16832">
    <property type="glycosylation" value="5 sites, No reported glycans"/>
</dbReference>
<dbReference type="GlyGen" id="Q16832">
    <property type="glycosylation" value="8 sites, 3 N-linked glycans (3 sites), 1 O-linked glycan (1 site)"/>
</dbReference>
<dbReference type="iPTMnet" id="Q16832"/>
<dbReference type="PhosphoSitePlus" id="Q16832"/>
<dbReference type="SwissPalm" id="Q16832"/>
<dbReference type="BioMuta" id="DDR2"/>
<dbReference type="DMDM" id="215273969"/>
<dbReference type="CPTAC" id="CPTAC-3009"/>
<dbReference type="jPOST" id="Q16832"/>
<dbReference type="MassIVE" id="Q16832"/>
<dbReference type="PaxDb" id="9606-ENSP00000356899"/>
<dbReference type="PeptideAtlas" id="Q16832"/>
<dbReference type="ProteomicsDB" id="61095"/>
<dbReference type="Antibodypedia" id="4177">
    <property type="antibodies" value="443 antibodies from 36 providers"/>
</dbReference>
<dbReference type="DNASU" id="4921"/>
<dbReference type="Ensembl" id="ENST00000367921.8">
    <property type="protein sequence ID" value="ENSP00000356898.3"/>
    <property type="gene ID" value="ENSG00000162733.19"/>
</dbReference>
<dbReference type="Ensembl" id="ENST00000367922.7">
    <property type="protein sequence ID" value="ENSP00000356899.2"/>
    <property type="gene ID" value="ENSG00000162733.19"/>
</dbReference>
<dbReference type="Ensembl" id="ENST00000446985.6">
    <property type="protein sequence ID" value="ENSP00000400309.2"/>
    <property type="gene ID" value="ENSG00000162733.19"/>
</dbReference>
<dbReference type="GeneID" id="4921"/>
<dbReference type="KEGG" id="hsa:4921"/>
<dbReference type="MANE-Select" id="ENST00000367921.8">
    <property type="protein sequence ID" value="ENSP00000356898.3"/>
    <property type="RefSeq nucleotide sequence ID" value="NM_006182.4"/>
    <property type="RefSeq protein sequence ID" value="NP_006173.2"/>
</dbReference>
<dbReference type="UCSC" id="uc001gcg.4">
    <property type="organism name" value="human"/>
</dbReference>
<dbReference type="AGR" id="HGNC:2731"/>
<dbReference type="CTD" id="4921"/>
<dbReference type="DisGeNET" id="4921"/>
<dbReference type="GeneCards" id="DDR2"/>
<dbReference type="HGNC" id="HGNC:2731">
    <property type="gene designation" value="DDR2"/>
</dbReference>
<dbReference type="HPA" id="ENSG00000162733">
    <property type="expression patterns" value="Low tissue specificity"/>
</dbReference>
<dbReference type="MalaCards" id="DDR2"/>
<dbReference type="MIM" id="191311">
    <property type="type" value="gene"/>
</dbReference>
<dbReference type="MIM" id="271665">
    <property type="type" value="phenotype"/>
</dbReference>
<dbReference type="MIM" id="618175">
    <property type="type" value="phenotype"/>
</dbReference>
<dbReference type="neXtProt" id="NX_Q16832"/>
<dbReference type="OpenTargets" id="ENSG00000162733"/>
<dbReference type="Orphanet" id="93358">
    <property type="disease" value="Spondyloepimetaphyseal dysplasia-short limb-abnormal calcification syndrome"/>
</dbReference>
<dbReference type="PharmGKB" id="PA27196"/>
<dbReference type="VEuPathDB" id="HostDB:ENSG00000162733"/>
<dbReference type="eggNOG" id="KOG1094">
    <property type="taxonomic scope" value="Eukaryota"/>
</dbReference>
<dbReference type="GeneTree" id="ENSGT00940000154842"/>
<dbReference type="HOGENOM" id="CLU_008873_2_0_1"/>
<dbReference type="InParanoid" id="Q16832"/>
<dbReference type="OMA" id="KWLRWKN"/>
<dbReference type="OrthoDB" id="6071166at2759"/>
<dbReference type="PAN-GO" id="Q16832">
    <property type="GO annotations" value="7 GO annotations based on evolutionary models"/>
</dbReference>
<dbReference type="PhylomeDB" id="Q16832"/>
<dbReference type="TreeFam" id="TF317840"/>
<dbReference type="BRENDA" id="2.7.10.1">
    <property type="organism ID" value="2681"/>
</dbReference>
<dbReference type="PathwayCommons" id="Q16832"/>
<dbReference type="Reactome" id="R-HSA-3000171">
    <property type="pathway name" value="Non-integrin membrane-ECM interactions"/>
</dbReference>
<dbReference type="SignaLink" id="Q16832"/>
<dbReference type="SIGNOR" id="Q16832"/>
<dbReference type="BioGRID-ORCS" id="4921">
    <property type="hits" value="9 hits in 1186 CRISPR screens"/>
</dbReference>
<dbReference type="ChiTaRS" id="DDR2">
    <property type="organism name" value="human"/>
</dbReference>
<dbReference type="EvolutionaryTrace" id="Q16832"/>
<dbReference type="GeneWiki" id="Discoidin_domain-containing_receptor_2"/>
<dbReference type="GenomeRNAi" id="4921"/>
<dbReference type="Pharos" id="Q16832">
    <property type="development level" value="Tchem"/>
</dbReference>
<dbReference type="PRO" id="PR:Q16832"/>
<dbReference type="Proteomes" id="UP000005640">
    <property type="component" value="Chromosome 1"/>
</dbReference>
<dbReference type="RNAct" id="Q16832">
    <property type="molecule type" value="protein"/>
</dbReference>
<dbReference type="Bgee" id="ENSG00000162733">
    <property type="expression patterns" value="Expressed in cauda epididymis and 199 other cell types or tissues"/>
</dbReference>
<dbReference type="ExpressionAtlas" id="Q16832">
    <property type="expression patterns" value="baseline and differential"/>
</dbReference>
<dbReference type="GO" id="GO:0015629">
    <property type="term" value="C:actin cytoskeleton"/>
    <property type="evidence" value="ECO:0000314"/>
    <property type="project" value="HPA"/>
</dbReference>
<dbReference type="GO" id="GO:0016324">
    <property type="term" value="C:apical plasma membrane"/>
    <property type="evidence" value="ECO:0007669"/>
    <property type="project" value="Ensembl"/>
</dbReference>
<dbReference type="GO" id="GO:0005925">
    <property type="term" value="C:focal adhesion"/>
    <property type="evidence" value="ECO:0007005"/>
    <property type="project" value="UniProtKB"/>
</dbReference>
<dbReference type="GO" id="GO:0005886">
    <property type="term" value="C:plasma membrane"/>
    <property type="evidence" value="ECO:0000314"/>
    <property type="project" value="HPA"/>
</dbReference>
<dbReference type="GO" id="GO:0043235">
    <property type="term" value="C:receptor complex"/>
    <property type="evidence" value="ECO:0000318"/>
    <property type="project" value="GO_Central"/>
</dbReference>
<dbReference type="GO" id="GO:0005524">
    <property type="term" value="F:ATP binding"/>
    <property type="evidence" value="ECO:0007669"/>
    <property type="project" value="UniProtKB-KW"/>
</dbReference>
<dbReference type="GO" id="GO:0005518">
    <property type="term" value="F:collagen binding"/>
    <property type="evidence" value="ECO:0000314"/>
    <property type="project" value="UniProtKB"/>
</dbReference>
<dbReference type="GO" id="GO:0038062">
    <property type="term" value="F:protein tyrosine kinase collagen receptor activity"/>
    <property type="evidence" value="ECO:0000314"/>
    <property type="project" value="UniProtKB"/>
</dbReference>
<dbReference type="GO" id="GO:0004714">
    <property type="term" value="F:transmembrane receptor protein tyrosine kinase activity"/>
    <property type="evidence" value="ECO:0000314"/>
    <property type="project" value="UniProtKB"/>
</dbReference>
<dbReference type="GO" id="GO:0031214">
    <property type="term" value="P:biomineral tissue development"/>
    <property type="evidence" value="ECO:0000250"/>
    <property type="project" value="UniProtKB"/>
</dbReference>
<dbReference type="GO" id="GO:0007155">
    <property type="term" value="P:cell adhesion"/>
    <property type="evidence" value="ECO:0000304"/>
    <property type="project" value="ProtInc"/>
</dbReference>
<dbReference type="GO" id="GO:0007169">
    <property type="term" value="P:cell surface receptor protein tyrosine kinase signaling pathway"/>
    <property type="evidence" value="ECO:0000318"/>
    <property type="project" value="GO_Central"/>
</dbReference>
<dbReference type="GO" id="GO:1904385">
    <property type="term" value="P:cellular response to angiotensin"/>
    <property type="evidence" value="ECO:0007669"/>
    <property type="project" value="Ensembl"/>
</dbReference>
<dbReference type="GO" id="GO:0071456">
    <property type="term" value="P:cellular response to hypoxia"/>
    <property type="evidence" value="ECO:0007669"/>
    <property type="project" value="Ensembl"/>
</dbReference>
<dbReference type="GO" id="GO:0071560">
    <property type="term" value="P:cellular response to transforming growth factor beta stimulus"/>
    <property type="evidence" value="ECO:0007669"/>
    <property type="project" value="Ensembl"/>
</dbReference>
<dbReference type="GO" id="GO:0035988">
    <property type="term" value="P:chondrocyte proliferation"/>
    <property type="evidence" value="ECO:0000250"/>
    <property type="project" value="UniProtKB"/>
</dbReference>
<dbReference type="GO" id="GO:0030199">
    <property type="term" value="P:collagen fibril organization"/>
    <property type="evidence" value="ECO:0000250"/>
    <property type="project" value="UniProtKB"/>
</dbReference>
<dbReference type="GO" id="GO:0038063">
    <property type="term" value="P:collagen-activated tyrosine kinase receptor signaling pathway"/>
    <property type="evidence" value="ECO:0000314"/>
    <property type="project" value="UniProtKB"/>
</dbReference>
<dbReference type="GO" id="GO:0003416">
    <property type="term" value="P:endochondral bone growth"/>
    <property type="evidence" value="ECO:0000250"/>
    <property type="project" value="UniProtKB"/>
</dbReference>
<dbReference type="GO" id="GO:0043066">
    <property type="term" value="P:negative regulation of apoptotic process"/>
    <property type="evidence" value="ECO:0007669"/>
    <property type="project" value="Ensembl"/>
</dbReference>
<dbReference type="GO" id="GO:1901299">
    <property type="term" value="P:negative regulation of hydrogen peroxide-mediated programmed cell death"/>
    <property type="evidence" value="ECO:0007669"/>
    <property type="project" value="Ensembl"/>
</dbReference>
<dbReference type="GO" id="GO:0001503">
    <property type="term" value="P:ossification"/>
    <property type="evidence" value="ECO:0007669"/>
    <property type="project" value="UniProtKB-KW"/>
</dbReference>
<dbReference type="GO" id="GO:0018108">
    <property type="term" value="P:peptidyl-tyrosine phosphorylation"/>
    <property type="evidence" value="ECO:0000314"/>
    <property type="project" value="UniProtKB"/>
</dbReference>
<dbReference type="GO" id="GO:0032967">
    <property type="term" value="P:positive regulation of collagen biosynthetic process"/>
    <property type="evidence" value="ECO:0007669"/>
    <property type="project" value="Ensembl"/>
</dbReference>
<dbReference type="GO" id="GO:0051091">
    <property type="term" value="P:positive regulation of DNA-binding transcription factor activity"/>
    <property type="evidence" value="ECO:0000315"/>
    <property type="project" value="UniProtKB"/>
</dbReference>
<dbReference type="GO" id="GO:0070374">
    <property type="term" value="P:positive regulation of ERK1 and ERK2 cascade"/>
    <property type="evidence" value="ECO:0007669"/>
    <property type="project" value="Ensembl"/>
</dbReference>
<dbReference type="GO" id="GO:0090091">
    <property type="term" value="P:positive regulation of extracellular matrix disassembly"/>
    <property type="evidence" value="ECO:0000250"/>
    <property type="project" value="UniProtKB"/>
</dbReference>
<dbReference type="GO" id="GO:0010763">
    <property type="term" value="P:positive regulation of fibroblast migration"/>
    <property type="evidence" value="ECO:0000250"/>
    <property type="project" value="UniProtKB"/>
</dbReference>
<dbReference type="GO" id="GO:0048146">
    <property type="term" value="P:positive regulation of fibroblast proliferation"/>
    <property type="evidence" value="ECO:0000250"/>
    <property type="project" value="UniProtKB"/>
</dbReference>
<dbReference type="GO" id="GO:1900087">
    <property type="term" value="P:positive regulation of G1/S transition of mitotic cell cycle"/>
    <property type="evidence" value="ECO:0007669"/>
    <property type="project" value="Ensembl"/>
</dbReference>
<dbReference type="GO" id="GO:2000491">
    <property type="term" value="P:positive regulation of hepatic stellate cell activation"/>
    <property type="evidence" value="ECO:0007669"/>
    <property type="project" value="Ensembl"/>
</dbReference>
<dbReference type="GO" id="GO:1904899">
    <property type="term" value="P:positive regulation of hepatic stellate cell proliferation"/>
    <property type="evidence" value="ECO:0007669"/>
    <property type="project" value="Ensembl"/>
</dbReference>
<dbReference type="GO" id="GO:0010976">
    <property type="term" value="P:positive regulation of neuron projection development"/>
    <property type="evidence" value="ECO:0000318"/>
    <property type="project" value="GO_Central"/>
</dbReference>
<dbReference type="GO" id="GO:0045669">
    <property type="term" value="P:positive regulation of osteoblast differentiation"/>
    <property type="evidence" value="ECO:0000315"/>
    <property type="project" value="UniProtKB"/>
</dbReference>
<dbReference type="GO" id="GO:0051897">
    <property type="term" value="P:positive regulation of phosphatidylinositol 3-kinase/protein kinase B signal transduction"/>
    <property type="evidence" value="ECO:0000318"/>
    <property type="project" value="GO_Central"/>
</dbReference>
<dbReference type="GO" id="GO:0045860">
    <property type="term" value="P:positive regulation of protein kinase activity"/>
    <property type="evidence" value="ECO:0000315"/>
    <property type="project" value="UniProtKB"/>
</dbReference>
<dbReference type="GO" id="GO:1904754">
    <property type="term" value="P:positive regulation of vascular associated smooth muscle cell migration"/>
    <property type="evidence" value="ECO:0007669"/>
    <property type="project" value="Ensembl"/>
</dbReference>
<dbReference type="GO" id="GO:1904707">
    <property type="term" value="P:positive regulation of vascular associated smooth muscle cell proliferation"/>
    <property type="evidence" value="ECO:0007669"/>
    <property type="project" value="Ensembl"/>
</dbReference>
<dbReference type="GO" id="GO:0090303">
    <property type="term" value="P:positive regulation of wound healing"/>
    <property type="evidence" value="ECO:0007669"/>
    <property type="project" value="Ensembl"/>
</dbReference>
<dbReference type="GO" id="GO:0046777">
    <property type="term" value="P:protein autophosphorylation"/>
    <property type="evidence" value="ECO:0000314"/>
    <property type="project" value="UniProtKB"/>
</dbReference>
<dbReference type="GO" id="GO:0030500">
    <property type="term" value="P:regulation of bone mineralization"/>
    <property type="evidence" value="ECO:0000315"/>
    <property type="project" value="UniProtKB"/>
</dbReference>
<dbReference type="GO" id="GO:0010715">
    <property type="term" value="P:regulation of extracellular matrix disassembly"/>
    <property type="evidence" value="ECO:0000304"/>
    <property type="project" value="UniProtKB"/>
</dbReference>
<dbReference type="GO" id="GO:0034103">
    <property type="term" value="P:regulation of tissue remodeling"/>
    <property type="evidence" value="ECO:0000315"/>
    <property type="project" value="UniProtKB"/>
</dbReference>
<dbReference type="GO" id="GO:0035994">
    <property type="term" value="P:response to muscle stretch"/>
    <property type="evidence" value="ECO:0007669"/>
    <property type="project" value="Ensembl"/>
</dbReference>
<dbReference type="GO" id="GO:0007165">
    <property type="term" value="P:signal transduction"/>
    <property type="evidence" value="ECO:0000304"/>
    <property type="project" value="ProtInc"/>
</dbReference>
<dbReference type="CDD" id="cd00057">
    <property type="entry name" value="FA58C"/>
    <property type="match status" value="1"/>
</dbReference>
<dbReference type="CDD" id="cd05095">
    <property type="entry name" value="PTKc_DDR2"/>
    <property type="match status" value="1"/>
</dbReference>
<dbReference type="FunFam" id="2.60.120.260:FF:000007">
    <property type="entry name" value="Discoidin domain receptor tyrosine kinase 1"/>
    <property type="match status" value="1"/>
</dbReference>
<dbReference type="FunFam" id="2.60.120.1190:FF:000001">
    <property type="entry name" value="Discoidin domain receptor tyrosine kinase 2"/>
    <property type="match status" value="1"/>
</dbReference>
<dbReference type="FunFam" id="1.10.510.10:FF:000053">
    <property type="entry name" value="Epithelial discoidin domain-containing receptor 1"/>
    <property type="match status" value="1"/>
</dbReference>
<dbReference type="FunFam" id="3.30.200.20:FF:000082">
    <property type="entry name" value="Epithelial discoidin domain-containing receptor 1"/>
    <property type="match status" value="1"/>
</dbReference>
<dbReference type="Gene3D" id="2.60.120.1190">
    <property type="match status" value="1"/>
</dbReference>
<dbReference type="Gene3D" id="2.60.120.260">
    <property type="entry name" value="Galactose-binding domain-like"/>
    <property type="match status" value="1"/>
</dbReference>
<dbReference type="Gene3D" id="3.30.200.20">
    <property type="entry name" value="Phosphorylase Kinase, domain 1"/>
    <property type="match status" value="1"/>
</dbReference>
<dbReference type="Gene3D" id="1.10.510.10">
    <property type="entry name" value="Transferase(Phosphotransferase) domain 1"/>
    <property type="match status" value="1"/>
</dbReference>
<dbReference type="InterPro" id="IPR048525">
    <property type="entry name" value="DDR1-2_DS-like"/>
</dbReference>
<dbReference type="InterPro" id="IPR000421">
    <property type="entry name" value="FA58C"/>
</dbReference>
<dbReference type="InterPro" id="IPR008979">
    <property type="entry name" value="Galactose-bd-like_sf"/>
</dbReference>
<dbReference type="InterPro" id="IPR011009">
    <property type="entry name" value="Kinase-like_dom_sf"/>
</dbReference>
<dbReference type="InterPro" id="IPR000719">
    <property type="entry name" value="Prot_kinase_dom"/>
</dbReference>
<dbReference type="InterPro" id="IPR050122">
    <property type="entry name" value="RTK"/>
</dbReference>
<dbReference type="InterPro" id="IPR001245">
    <property type="entry name" value="Ser-Thr/Tyr_kinase_cat_dom"/>
</dbReference>
<dbReference type="InterPro" id="IPR008266">
    <property type="entry name" value="Tyr_kinase_AS"/>
</dbReference>
<dbReference type="InterPro" id="IPR020635">
    <property type="entry name" value="Tyr_kinase_cat_dom"/>
</dbReference>
<dbReference type="InterPro" id="IPR002011">
    <property type="entry name" value="Tyr_kinase_rcpt_2_CS"/>
</dbReference>
<dbReference type="PANTHER" id="PTHR24416:SF295">
    <property type="entry name" value="DISCOIDIN DOMAIN-CONTAINING RECEPTOR 2"/>
    <property type="match status" value="1"/>
</dbReference>
<dbReference type="PANTHER" id="PTHR24416">
    <property type="entry name" value="TYROSINE-PROTEIN KINASE RECEPTOR"/>
    <property type="match status" value="1"/>
</dbReference>
<dbReference type="Pfam" id="PF21114">
    <property type="entry name" value="DDR1-2_DS-like"/>
    <property type="match status" value="1"/>
</dbReference>
<dbReference type="Pfam" id="PF00754">
    <property type="entry name" value="F5_F8_type_C"/>
    <property type="match status" value="1"/>
</dbReference>
<dbReference type="Pfam" id="PF07714">
    <property type="entry name" value="PK_Tyr_Ser-Thr"/>
    <property type="match status" value="1"/>
</dbReference>
<dbReference type="PRINTS" id="PR00109">
    <property type="entry name" value="TYRKINASE"/>
</dbReference>
<dbReference type="SMART" id="SM00231">
    <property type="entry name" value="FA58C"/>
    <property type="match status" value="1"/>
</dbReference>
<dbReference type="SMART" id="SM00219">
    <property type="entry name" value="TyrKc"/>
    <property type="match status" value="1"/>
</dbReference>
<dbReference type="SUPFAM" id="SSF49785">
    <property type="entry name" value="Galactose-binding domain-like"/>
    <property type="match status" value="1"/>
</dbReference>
<dbReference type="SUPFAM" id="SSF56112">
    <property type="entry name" value="Protein kinase-like (PK-like)"/>
    <property type="match status" value="1"/>
</dbReference>
<dbReference type="PROSITE" id="PS01285">
    <property type="entry name" value="FA58C_1"/>
    <property type="match status" value="1"/>
</dbReference>
<dbReference type="PROSITE" id="PS01286">
    <property type="entry name" value="FA58C_2"/>
    <property type="match status" value="1"/>
</dbReference>
<dbReference type="PROSITE" id="PS50022">
    <property type="entry name" value="FA58C_3"/>
    <property type="match status" value="1"/>
</dbReference>
<dbReference type="PROSITE" id="PS50011">
    <property type="entry name" value="PROTEIN_KINASE_DOM"/>
    <property type="match status" value="1"/>
</dbReference>
<dbReference type="PROSITE" id="PS00109">
    <property type="entry name" value="PROTEIN_KINASE_TYR"/>
    <property type="match status" value="1"/>
</dbReference>
<dbReference type="PROSITE" id="PS00239">
    <property type="entry name" value="RECEPTOR_TYR_KIN_II"/>
    <property type="match status" value="1"/>
</dbReference>
<gene>
    <name type="primary">DDR2</name>
    <name type="synonym">NTRKR3</name>
    <name type="synonym">TKT</name>
    <name type="synonym">TYRO10</name>
</gene>
<comment type="function">
    <text evidence="8 9 11 13 15 17 18 20 22">Tyrosine kinase involved in the regulation of tissues remodeling (PubMed:30449416). It functions as a cell surface receptor for fibrillar collagen and regulates cell differentiation, remodeling of the extracellular matrix, cell migration and cell proliferation. Required for normal bone development. Regulates osteoblast differentiation and chondrocyte maturation via a signaling pathway that involves MAP kinases and leads to the activation of the transcription factor RUNX2. Regulates remodeling of the extracellular matrix by up-regulation of the collagenases MMP1, MMP2 and MMP13, and thereby facilitates cell migration and tumor cell invasion. Promotes fibroblast migration and proliferation, and thereby contributes to cutaneous wound healing.</text>
</comment>
<comment type="catalytic activity">
    <reaction evidence="5 9 15">
        <text>L-tyrosyl-[protein] + ATP = O-phospho-L-tyrosyl-[protein] + ADP + H(+)</text>
        <dbReference type="Rhea" id="RHEA:10596"/>
        <dbReference type="Rhea" id="RHEA-COMP:10136"/>
        <dbReference type="Rhea" id="RHEA-COMP:20101"/>
        <dbReference type="ChEBI" id="CHEBI:15378"/>
        <dbReference type="ChEBI" id="CHEBI:30616"/>
        <dbReference type="ChEBI" id="CHEBI:46858"/>
        <dbReference type="ChEBI" id="CHEBI:61978"/>
        <dbReference type="ChEBI" id="CHEBI:456216"/>
        <dbReference type="EC" id="2.7.10.1"/>
    </reaction>
</comment>
<comment type="activity regulation">
    <text evidence="9">Present in an inactive state in the absence of collagen binding and phosphorylation by SRC. Tyrosine phosphorylation enhances the affinity for ATP and the catalytic activity.</text>
</comment>
<comment type="subunit">
    <text evidence="9 12 13 15">Binds hydroxyproline-rich sequence motifs in fibrillar, glycosylated collagen, such as the GQOGVMGFO motif, where O stands for hydroxyproline. Interacts with SRC. Interacts (tyrosine phosphorylated) with SHC1.</text>
</comment>
<comment type="interaction">
    <interactant intactId="EBI-1381484">
        <id>Q16832</id>
    </interactant>
    <interactant intactId="EBI-295634">
        <id>Q16543</id>
        <label>CDC37</label>
    </interactant>
    <organismsDiffer>false</organismsDiffer>
    <experiments>3</experiments>
</comment>
<comment type="interaction">
    <interactant intactId="EBI-1381484">
        <id>Q16832</id>
    </interactant>
    <interactant intactId="EBI-2515504">
        <id>P13942</id>
        <label>COL11A2</label>
    </interactant>
    <organismsDiffer>false</organismsDiffer>
    <experiments>2</experiments>
</comment>
<comment type="interaction">
    <interactant intactId="EBI-1381484">
        <id>Q16832</id>
    </interactant>
    <interactant intactId="EBI-711879">
        <id>Q08345</id>
        <label>DDR1</label>
    </interactant>
    <organismsDiffer>false</organismsDiffer>
    <experiments>3</experiments>
</comment>
<comment type="interaction">
    <interactant intactId="EBI-1381484">
        <id>Q16832</id>
    </interactant>
    <interactant intactId="EBI-352572">
        <id>P08238</id>
        <label>HSP90AB1</label>
    </interactant>
    <organismsDiffer>false</organismsDiffer>
    <experiments>3</experiments>
</comment>
<comment type="interaction">
    <interactant intactId="EBI-1381484">
        <id>Q16832</id>
    </interactant>
    <interactant intactId="EBI-3936704">
        <id>Q16288</id>
        <label>NTRK3</label>
    </interactant>
    <organismsDiffer>false</organismsDiffer>
    <experiments>2</experiments>
</comment>
<comment type="subcellular location">
    <subcellularLocation>
        <location evidence="13 16 22">Cell membrane</location>
        <topology evidence="13 16 22">Single-pass type I membrane protein</topology>
    </subcellularLocation>
</comment>
<comment type="tissue specificity">
    <text evidence="11 17 21">Detected in osteocytes, osteoblastic cells in subchondral bone, bone lining cells, tibia and cartilage (at protein level). Detected at high levels in heart and lung, and at low levels in brain, placenta, liver, skeletal muscle, pancreas, and kidney.</text>
</comment>
<comment type="induction">
    <text evidence="11 17">Up-regulated during osteoblast differentiation (in vitro). Up-regulated in cartilage from osteoarthritis patients.</text>
</comment>
<comment type="PTM">
    <text evidence="16">N-glycosylated.</text>
</comment>
<comment type="PTM">
    <text evidence="8 9 13 15 22">Tyrosine phosphorylated in response to collagen binding. Phosphorylated by SRC; this is required for activation and subsequent autophosphorylation on additional tyrosine residues.</text>
</comment>
<comment type="disease" evidence="14 16 19">
    <disease id="DI-02538">
        <name>Spondyloepimetaphyseal dysplasia, short limb-hand type</name>
        <acronym>SEMD-SL</acronym>
        <description>A bone disease characterized by short-limbed dwarfism, a narrow chest with pectus excavatum, brachydactyly in the hands and feet, a characteristic craniofacial appearance and premature calcifications. The radiological findings are distinctive and comprise short long bones throughout the skeleton with striking epiphyses that are stippled, flattened and fragmented and flared, irregular metaphyses. Platyspondyly in the spine with wide intervertebral spaces is observed and some vertebral bodies are pear-shaped with central humps, anterior protrusions and posterior scalloping.</description>
        <dbReference type="MIM" id="271665"/>
    </disease>
    <text>The disease is caused by variants affecting the gene represented in this entry.</text>
</comment>
<comment type="disease" evidence="20">
    <disease id="DI-05476">
        <name>Warburg-Cinotti syndrome</name>
        <acronym>WRCN</acronym>
        <description>An autosomal dominant disease characterized by progressive corneal neovascularization, keloid formation, chronic skin ulcers, wasting of subcutaneous tissue, flexion contractures of the fingers, and acro-osteolysis.</description>
        <dbReference type="MIM" id="618175"/>
    </disease>
    <text>The disease is caused by variants affecting the gene represented in this entry.</text>
</comment>
<comment type="similarity">
    <text evidence="4">Belongs to the protein kinase superfamily. Tyr protein kinase family. Insulin receptor subfamily.</text>
</comment>
<name>DDR2_HUMAN</name>
<sequence>MILIPRMLLVLFLLLPILSSAKAQVNPAICRYPLGMSGGQIPDEDITASSQWSESTAAKYGRLDSEEGDGAWCPEIPVEPDDLKEFLQIDLHTLHFITLVGTQGRHAGGHGIEFAPMYKINYSRDGTRWISWRNRHGKQVLDGNSNPYDIFLKDLEPPIVARFVRFIPVTDHSMNVCMRVELYGCVWLDGLVSYNAPAGQQFVLPGGSIIYLNDSVYDGAVGYSMTEGLGQLTDGVSGLDDFTQTHEYHVWPGYDYVGWRNESATNGYIEIMFEFDRIRNFTTMKVHCNNMFAKGVKIFKEVQCYFRSEASEWEPNAISFPLVLDDVNPSARFVTVPLHHRMASAIKCQYHFADTWMMFSEITFQSDAAMYNNSEALPTSPMAPTTYDPMLKVDDSNTRILIGCLVAIIFILLAIIVIILWRQFWQKMLEKASRRMLDDEMTVSLSLPSDSSMFNNNRSSSPSEQGSNSTYDRIFPLRPDYQEPSRLIRKLPEFAPGEEESGCSGVVKPVQPSGPEGVPHYAEADIVNLQGVTGGNTYSVPAVTMDLLSGKDVAVEEFPRKLLTFKEKLGEGQFGEVHLCEVEGMEKFKDKDFALDVSANQPVLVAVKMLRADANKNARNDFLKEIKIMSRLKDPNIIHLLAVCITDDPLCMITEYMENGDLNQFLSRHEPPNSSSSDVRTVSYTNLKFMATQIASGMKYLSSLNFVHRDLATRNCLVGKNYTIKIADFGMSRNLYSGDYYRIQGRAVLPIRWMSWESILLGKFTTASDVWAFGVTLWETFTFCQEQPYSQLSDEQVIENTGEFFRDQGRQTYLPQPAICPDSVYKLMLSCWRRDTKNRPSFQEIHLLLLQQGDE</sequence>
<keyword id="KW-0002">3D-structure</keyword>
<keyword id="KW-0067">ATP-binding</keyword>
<keyword id="KW-1003">Cell membrane</keyword>
<keyword id="KW-0225">Disease variant</keyword>
<keyword id="KW-1015">Disulfide bond</keyword>
<keyword id="KW-0242">Dwarfism</keyword>
<keyword id="KW-0325">Glycoprotein</keyword>
<keyword id="KW-0418">Kinase</keyword>
<keyword id="KW-0472">Membrane</keyword>
<keyword id="KW-0547">Nucleotide-binding</keyword>
<keyword id="KW-0892">Osteogenesis</keyword>
<keyword id="KW-0597">Phosphoprotein</keyword>
<keyword id="KW-1267">Proteomics identification</keyword>
<keyword id="KW-0675">Receptor</keyword>
<keyword id="KW-1185">Reference proteome</keyword>
<keyword id="KW-0732">Signal</keyword>
<keyword id="KW-0808">Transferase</keyword>
<keyword id="KW-0812">Transmembrane</keyword>
<keyword id="KW-1133">Transmembrane helix</keyword>
<keyword id="KW-0829">Tyrosine-protein kinase</keyword>
<organism>
    <name type="scientific">Homo sapiens</name>
    <name type="common">Human</name>
    <dbReference type="NCBI Taxonomy" id="9606"/>
    <lineage>
        <taxon>Eukaryota</taxon>
        <taxon>Metazoa</taxon>
        <taxon>Chordata</taxon>
        <taxon>Craniata</taxon>
        <taxon>Vertebrata</taxon>
        <taxon>Euteleostomi</taxon>
        <taxon>Mammalia</taxon>
        <taxon>Eutheria</taxon>
        <taxon>Euarchontoglires</taxon>
        <taxon>Primates</taxon>
        <taxon>Haplorrhini</taxon>
        <taxon>Catarrhini</taxon>
        <taxon>Hominidae</taxon>
        <taxon>Homo</taxon>
    </lineage>
</organism>
<reference key="1">
    <citation type="journal article" date="1993" name="Oncogene">
        <title>Structure, expression and chromosomal mapping of TKT from man and mouse: a new subclass of receptor tyrosine kinases with a factor VIII-like domain.</title>
        <authorList>
            <person name="Karn T."/>
            <person name="Holtrich U."/>
            <person name="Braeuninger A."/>
            <person name="Boehme B."/>
            <person name="Wolf G."/>
            <person name="Ruebsamen-Waigmann H."/>
            <person name="Strebhardt K."/>
        </authorList>
    </citation>
    <scope>NUCLEOTIDE SEQUENCE [MRNA]</scope>
    <scope>TISSUE SPECIFICITY</scope>
    <source>
        <tissue>Heart</tissue>
        <tissue>Thymus</tissue>
    </source>
</reference>
<reference key="2">
    <citation type="journal article" date="2004" name="Nat. Genet.">
        <title>Complete sequencing and characterization of 21,243 full-length human cDNAs.</title>
        <authorList>
            <person name="Ota T."/>
            <person name="Suzuki Y."/>
            <person name="Nishikawa T."/>
            <person name="Otsuki T."/>
            <person name="Sugiyama T."/>
            <person name="Irie R."/>
            <person name="Wakamatsu A."/>
            <person name="Hayashi K."/>
            <person name="Sato H."/>
            <person name="Nagai K."/>
            <person name="Kimura K."/>
            <person name="Makita H."/>
            <person name="Sekine M."/>
            <person name="Obayashi M."/>
            <person name="Nishi T."/>
            <person name="Shibahara T."/>
            <person name="Tanaka T."/>
            <person name="Ishii S."/>
            <person name="Yamamoto J."/>
            <person name="Saito K."/>
            <person name="Kawai Y."/>
            <person name="Isono Y."/>
            <person name="Nakamura Y."/>
            <person name="Nagahari K."/>
            <person name="Murakami K."/>
            <person name="Yasuda T."/>
            <person name="Iwayanagi T."/>
            <person name="Wagatsuma M."/>
            <person name="Shiratori A."/>
            <person name="Sudo H."/>
            <person name="Hosoiri T."/>
            <person name="Kaku Y."/>
            <person name="Kodaira H."/>
            <person name="Kondo H."/>
            <person name="Sugawara M."/>
            <person name="Takahashi M."/>
            <person name="Kanda K."/>
            <person name="Yokoi T."/>
            <person name="Furuya T."/>
            <person name="Kikkawa E."/>
            <person name="Omura Y."/>
            <person name="Abe K."/>
            <person name="Kamihara K."/>
            <person name="Katsuta N."/>
            <person name="Sato K."/>
            <person name="Tanikawa M."/>
            <person name="Yamazaki M."/>
            <person name="Ninomiya K."/>
            <person name="Ishibashi T."/>
            <person name="Yamashita H."/>
            <person name="Murakawa K."/>
            <person name="Fujimori K."/>
            <person name="Tanai H."/>
            <person name="Kimata M."/>
            <person name="Watanabe M."/>
            <person name="Hiraoka S."/>
            <person name="Chiba Y."/>
            <person name="Ishida S."/>
            <person name="Ono Y."/>
            <person name="Takiguchi S."/>
            <person name="Watanabe S."/>
            <person name="Yosida M."/>
            <person name="Hotuta T."/>
            <person name="Kusano J."/>
            <person name="Kanehori K."/>
            <person name="Takahashi-Fujii A."/>
            <person name="Hara H."/>
            <person name="Tanase T.-O."/>
            <person name="Nomura Y."/>
            <person name="Togiya S."/>
            <person name="Komai F."/>
            <person name="Hara R."/>
            <person name="Takeuchi K."/>
            <person name="Arita M."/>
            <person name="Imose N."/>
            <person name="Musashino K."/>
            <person name="Yuuki H."/>
            <person name="Oshima A."/>
            <person name="Sasaki N."/>
            <person name="Aotsuka S."/>
            <person name="Yoshikawa Y."/>
            <person name="Matsunawa H."/>
            <person name="Ichihara T."/>
            <person name="Shiohata N."/>
            <person name="Sano S."/>
            <person name="Moriya S."/>
            <person name="Momiyama H."/>
            <person name="Satoh N."/>
            <person name="Takami S."/>
            <person name="Terashima Y."/>
            <person name="Suzuki O."/>
            <person name="Nakagawa S."/>
            <person name="Senoh A."/>
            <person name="Mizoguchi H."/>
            <person name="Goto Y."/>
            <person name="Shimizu F."/>
            <person name="Wakebe H."/>
            <person name="Hishigaki H."/>
            <person name="Watanabe T."/>
            <person name="Sugiyama A."/>
            <person name="Takemoto M."/>
            <person name="Kawakami B."/>
            <person name="Yamazaki M."/>
            <person name="Watanabe K."/>
            <person name="Kumagai A."/>
            <person name="Itakura S."/>
            <person name="Fukuzumi Y."/>
            <person name="Fujimori Y."/>
            <person name="Komiyama M."/>
            <person name="Tashiro H."/>
            <person name="Tanigami A."/>
            <person name="Fujiwara T."/>
            <person name="Ono T."/>
            <person name="Yamada K."/>
            <person name="Fujii Y."/>
            <person name="Ozaki K."/>
            <person name="Hirao M."/>
            <person name="Ohmori Y."/>
            <person name="Kawabata A."/>
            <person name="Hikiji T."/>
            <person name="Kobatake N."/>
            <person name="Inagaki H."/>
            <person name="Ikema Y."/>
            <person name="Okamoto S."/>
            <person name="Okitani R."/>
            <person name="Kawakami T."/>
            <person name="Noguchi S."/>
            <person name="Itoh T."/>
            <person name="Shigeta K."/>
            <person name="Senba T."/>
            <person name="Matsumura K."/>
            <person name="Nakajima Y."/>
            <person name="Mizuno T."/>
            <person name="Morinaga M."/>
            <person name="Sasaki M."/>
            <person name="Togashi T."/>
            <person name="Oyama M."/>
            <person name="Hata H."/>
            <person name="Watanabe M."/>
            <person name="Komatsu T."/>
            <person name="Mizushima-Sugano J."/>
            <person name="Satoh T."/>
            <person name="Shirai Y."/>
            <person name="Takahashi Y."/>
            <person name="Nakagawa K."/>
            <person name="Okumura K."/>
            <person name="Nagase T."/>
            <person name="Nomura N."/>
            <person name="Kikuchi H."/>
            <person name="Masuho Y."/>
            <person name="Yamashita R."/>
            <person name="Nakai K."/>
            <person name="Yada T."/>
            <person name="Nakamura Y."/>
            <person name="Ohara O."/>
            <person name="Isogai T."/>
            <person name="Sugano S."/>
        </authorList>
    </citation>
    <scope>NUCLEOTIDE SEQUENCE [LARGE SCALE MRNA]</scope>
    <source>
        <tissue>Hair follicle dermal papilla</tissue>
        <tissue>Uterus</tissue>
    </source>
</reference>
<reference key="3">
    <citation type="journal article" date="2006" name="Nature">
        <title>The DNA sequence and biological annotation of human chromosome 1.</title>
        <authorList>
            <person name="Gregory S.G."/>
            <person name="Barlow K.F."/>
            <person name="McLay K.E."/>
            <person name="Kaul R."/>
            <person name="Swarbreck D."/>
            <person name="Dunham A."/>
            <person name="Scott C.E."/>
            <person name="Howe K.L."/>
            <person name="Woodfine K."/>
            <person name="Spencer C.C.A."/>
            <person name="Jones M.C."/>
            <person name="Gillson C."/>
            <person name="Searle S."/>
            <person name="Zhou Y."/>
            <person name="Kokocinski F."/>
            <person name="McDonald L."/>
            <person name="Evans R."/>
            <person name="Phillips K."/>
            <person name="Atkinson A."/>
            <person name="Cooper R."/>
            <person name="Jones C."/>
            <person name="Hall R.E."/>
            <person name="Andrews T.D."/>
            <person name="Lloyd C."/>
            <person name="Ainscough R."/>
            <person name="Almeida J.P."/>
            <person name="Ambrose K.D."/>
            <person name="Anderson F."/>
            <person name="Andrew R.W."/>
            <person name="Ashwell R.I.S."/>
            <person name="Aubin K."/>
            <person name="Babbage A.K."/>
            <person name="Bagguley C.L."/>
            <person name="Bailey J."/>
            <person name="Beasley H."/>
            <person name="Bethel G."/>
            <person name="Bird C.P."/>
            <person name="Bray-Allen S."/>
            <person name="Brown J.Y."/>
            <person name="Brown A.J."/>
            <person name="Buckley D."/>
            <person name="Burton J."/>
            <person name="Bye J."/>
            <person name="Carder C."/>
            <person name="Chapman J.C."/>
            <person name="Clark S.Y."/>
            <person name="Clarke G."/>
            <person name="Clee C."/>
            <person name="Cobley V."/>
            <person name="Collier R.E."/>
            <person name="Corby N."/>
            <person name="Coville G.J."/>
            <person name="Davies J."/>
            <person name="Deadman R."/>
            <person name="Dunn M."/>
            <person name="Earthrowl M."/>
            <person name="Ellington A.G."/>
            <person name="Errington H."/>
            <person name="Frankish A."/>
            <person name="Frankland J."/>
            <person name="French L."/>
            <person name="Garner P."/>
            <person name="Garnett J."/>
            <person name="Gay L."/>
            <person name="Ghori M.R.J."/>
            <person name="Gibson R."/>
            <person name="Gilby L.M."/>
            <person name="Gillett W."/>
            <person name="Glithero R.J."/>
            <person name="Grafham D.V."/>
            <person name="Griffiths C."/>
            <person name="Griffiths-Jones S."/>
            <person name="Grocock R."/>
            <person name="Hammond S."/>
            <person name="Harrison E.S.I."/>
            <person name="Hart E."/>
            <person name="Haugen E."/>
            <person name="Heath P.D."/>
            <person name="Holmes S."/>
            <person name="Holt K."/>
            <person name="Howden P.J."/>
            <person name="Hunt A.R."/>
            <person name="Hunt S.E."/>
            <person name="Hunter G."/>
            <person name="Isherwood J."/>
            <person name="James R."/>
            <person name="Johnson C."/>
            <person name="Johnson D."/>
            <person name="Joy A."/>
            <person name="Kay M."/>
            <person name="Kershaw J.K."/>
            <person name="Kibukawa M."/>
            <person name="Kimberley A.M."/>
            <person name="King A."/>
            <person name="Knights A.J."/>
            <person name="Lad H."/>
            <person name="Laird G."/>
            <person name="Lawlor S."/>
            <person name="Leongamornlert D.A."/>
            <person name="Lloyd D.M."/>
            <person name="Loveland J."/>
            <person name="Lovell J."/>
            <person name="Lush M.J."/>
            <person name="Lyne R."/>
            <person name="Martin S."/>
            <person name="Mashreghi-Mohammadi M."/>
            <person name="Matthews L."/>
            <person name="Matthews N.S.W."/>
            <person name="McLaren S."/>
            <person name="Milne S."/>
            <person name="Mistry S."/>
            <person name="Moore M.J.F."/>
            <person name="Nickerson T."/>
            <person name="O'Dell C.N."/>
            <person name="Oliver K."/>
            <person name="Palmeiri A."/>
            <person name="Palmer S.A."/>
            <person name="Parker A."/>
            <person name="Patel D."/>
            <person name="Pearce A.V."/>
            <person name="Peck A.I."/>
            <person name="Pelan S."/>
            <person name="Phelps K."/>
            <person name="Phillimore B.J."/>
            <person name="Plumb R."/>
            <person name="Rajan J."/>
            <person name="Raymond C."/>
            <person name="Rouse G."/>
            <person name="Saenphimmachak C."/>
            <person name="Sehra H.K."/>
            <person name="Sheridan E."/>
            <person name="Shownkeen R."/>
            <person name="Sims S."/>
            <person name="Skuce C.D."/>
            <person name="Smith M."/>
            <person name="Steward C."/>
            <person name="Subramanian S."/>
            <person name="Sycamore N."/>
            <person name="Tracey A."/>
            <person name="Tromans A."/>
            <person name="Van Helmond Z."/>
            <person name="Wall M."/>
            <person name="Wallis J.M."/>
            <person name="White S."/>
            <person name="Whitehead S.L."/>
            <person name="Wilkinson J.E."/>
            <person name="Willey D.L."/>
            <person name="Williams H."/>
            <person name="Wilming L."/>
            <person name="Wray P.W."/>
            <person name="Wu Z."/>
            <person name="Coulson A."/>
            <person name="Vaudin M."/>
            <person name="Sulston J.E."/>
            <person name="Durbin R.M."/>
            <person name="Hubbard T."/>
            <person name="Wooster R."/>
            <person name="Dunham I."/>
            <person name="Carter N.P."/>
            <person name="McVean G."/>
            <person name="Ross M.T."/>
            <person name="Harrow J."/>
            <person name="Olson M.V."/>
            <person name="Beck S."/>
            <person name="Rogers J."/>
            <person name="Bentley D.R."/>
        </authorList>
    </citation>
    <scope>NUCLEOTIDE SEQUENCE [LARGE SCALE GENOMIC DNA]</scope>
</reference>
<reference key="4">
    <citation type="submission" date="2005-07" db="EMBL/GenBank/DDBJ databases">
        <authorList>
            <person name="Mural R.J."/>
            <person name="Istrail S."/>
            <person name="Sutton G.G."/>
            <person name="Florea L."/>
            <person name="Halpern A.L."/>
            <person name="Mobarry C.M."/>
            <person name="Lippert R."/>
            <person name="Walenz B."/>
            <person name="Shatkay H."/>
            <person name="Dew I."/>
            <person name="Miller J.R."/>
            <person name="Flanigan M.J."/>
            <person name="Edwards N.J."/>
            <person name="Bolanos R."/>
            <person name="Fasulo D."/>
            <person name="Halldorsson B.V."/>
            <person name="Hannenhalli S."/>
            <person name="Turner R."/>
            <person name="Yooseph S."/>
            <person name="Lu F."/>
            <person name="Nusskern D.R."/>
            <person name="Shue B.C."/>
            <person name="Zheng X.H."/>
            <person name="Zhong F."/>
            <person name="Delcher A.L."/>
            <person name="Huson D.H."/>
            <person name="Kravitz S.A."/>
            <person name="Mouchard L."/>
            <person name="Reinert K."/>
            <person name="Remington K.A."/>
            <person name="Clark A.G."/>
            <person name="Waterman M.S."/>
            <person name="Eichler E.E."/>
            <person name="Adams M.D."/>
            <person name="Hunkapiller M.W."/>
            <person name="Myers E.W."/>
            <person name="Venter J.C."/>
        </authorList>
    </citation>
    <scope>NUCLEOTIDE SEQUENCE [LARGE SCALE GENOMIC DNA]</scope>
</reference>
<reference key="5">
    <citation type="journal article" date="2004" name="Genome Res.">
        <title>The status, quality, and expansion of the NIH full-length cDNA project: the Mammalian Gene Collection (MGC).</title>
        <authorList>
            <consortium name="The MGC Project Team"/>
        </authorList>
    </citation>
    <scope>NUCLEOTIDE SEQUENCE [LARGE SCALE MRNA]</scope>
    <source>
        <tissue>Skin</tissue>
    </source>
</reference>
<reference key="6">
    <citation type="journal article" date="1997" name="Mol. Cell">
        <title>The discoidin domain receptor tyrosine kinases are activated by collagen.</title>
        <authorList>
            <person name="Vogel W."/>
            <person name="Gish G.D."/>
            <person name="Alves F."/>
            <person name="Pawson T."/>
        </authorList>
    </citation>
    <scope>FUNCTION AS COLLAGEN RECEPTOR AND IN UP-REGULATION OF MMP1</scope>
    <scope>PHOSPHORYLATION</scope>
    <scope>SUBCELLULAR LOCATION</scope>
</reference>
<reference key="7">
    <citation type="journal article" date="2005" name="J. Biol. Chem.">
        <title>Tyrosine 740 phosphorylation of discoidin domain receptor 2 by Src stimulates intramolecular autophosphorylation and Shc signaling complex formation.</title>
        <authorList>
            <person name="Yang K."/>
            <person name="Kim J.H."/>
            <person name="Kim H.J."/>
            <person name="Park I.S."/>
            <person name="Kim I.Y."/>
            <person name="Yang B.S."/>
        </authorList>
    </citation>
    <scope>FUNCTION IN REGULATION OF MMP1 AND MMP2</scope>
    <scope>PHOSPHORYLATION AT TYR-736; TYR-740 AND TYR-741</scope>
    <scope>CATALYTIC ACTIVITY</scope>
    <scope>ACTIVITY REGULATION</scope>
    <scope>INTERACTION WITH SHC1</scope>
    <scope>MUTAGENESIS OF LYS-608; TYR-736; TYR-740 AND TYR-741</scope>
</reference>
<reference key="8">
    <citation type="journal article" date="2005" name="J. Biol. Chem.">
        <title>Discoidin domain receptor 2 mediates tumor cell cycle arrest induced by fibrillar collagen.</title>
        <authorList>
            <person name="Wall S.J."/>
            <person name="Werner E."/>
            <person name="Werb Z."/>
            <person name="DeClerck Y.A."/>
        </authorList>
    </citation>
    <scope>FUNCTION AS COLLAGEN RECEPTOR</scope>
    <scope>PHOSPHORYLATION</scope>
</reference>
<reference key="9">
    <citation type="journal article" date="2007" name="Arthritis Rheum.">
        <title>Increased expression of the collagen receptor discoidin domain receptor 2 in articular cartilage as a key event in the pathogenesis of osteoarthritis.</title>
        <authorList>
            <person name="Xu L."/>
            <person name="Peng H."/>
            <person name="Glasson S."/>
            <person name="Lee P.L."/>
            <person name="Hu K."/>
            <person name="Ijiri K."/>
            <person name="Olsen B.R."/>
            <person name="Goldring M.B."/>
            <person name="Li Y."/>
        </authorList>
    </citation>
    <scope>FUNCTION IN UP-REGULATION OF MMP13</scope>
    <scope>INDUCTION</scope>
    <scope>TISSUE SPECIFICITY</scope>
</reference>
<reference key="10">
    <citation type="journal article" date="2008" name="J. Biol. Chem.">
        <title>Characterization of high affinity binding motifs for the discoidin domain receptor DDR2 in collagen.</title>
        <authorList>
            <person name="Konitsiotis A.D."/>
            <person name="Raynal N."/>
            <person name="Bihan D."/>
            <person name="Hohenester E."/>
            <person name="Farndale R.W."/>
            <person name="Leitinger B."/>
        </authorList>
    </citation>
    <scope>FUNCTION AS COLLAGEN RECEPTOR</scope>
    <scope>SUBCELLULAR LOCATION</scope>
    <scope>PHOSPHORYLATION</scope>
    <scope>SUBUNIT</scope>
</reference>
<reference key="11">
    <citation type="journal article" date="2008" name="Proc. Natl. Acad. Sci. U.S.A.">
        <title>A quantitative atlas of mitotic phosphorylation.</title>
        <authorList>
            <person name="Dephoure N."/>
            <person name="Zhou C."/>
            <person name="Villen J."/>
            <person name="Beausoleil S.A."/>
            <person name="Bakalarski C.E."/>
            <person name="Elledge S.J."/>
            <person name="Gygi S.P."/>
        </authorList>
    </citation>
    <scope>IDENTIFICATION BY MASS SPECTROMETRY [LARGE SCALE ANALYSIS]</scope>
    <source>
        <tissue>Cervix carcinoma</tissue>
    </source>
</reference>
<reference key="12">
    <citation type="journal article" date="2009" name="Mol. Cell. Proteomics">
        <title>Large-scale proteomics analysis of the human kinome.</title>
        <authorList>
            <person name="Oppermann F.S."/>
            <person name="Gnad F."/>
            <person name="Olsen J.V."/>
            <person name="Hornberger R."/>
            <person name="Greff Z."/>
            <person name="Keri G."/>
            <person name="Mann M."/>
            <person name="Daub H."/>
        </authorList>
    </citation>
    <scope>IDENTIFICATION BY MASS SPECTROMETRY [LARGE SCALE ANALYSIS]</scope>
</reference>
<reference key="13">
    <citation type="journal article" date="2010" name="J. Bone Miner. Res.">
        <title>Transcriptional upregulation of DDR2 by ATF4 facilitates osteoblastic differentiation through p38 MAPK-mediated Runx2 activation.</title>
        <authorList>
            <person name="Lin K.L."/>
            <person name="Chou C.H."/>
            <person name="Hsieh S.C."/>
            <person name="Hwa S.Y."/>
            <person name="Lee M.T."/>
            <person name="Wang F.F."/>
        </authorList>
    </citation>
    <scope>FUNCTION IN OSTEOBLAST DIFFERENTIATION VIA ACTIVATION OF RUNX2</scope>
    <scope>INDUCTION</scope>
    <scope>TISSUE SPECIFICITY</scope>
</reference>
<reference key="14">
    <citation type="journal article" date="2011" name="J. Bone Miner. Res.">
        <title>An essential role of discoidin domain receptor 2 (DDR2) in osteoblast differentiation and chondrocyte maturation via modulation of Runx2 activation.</title>
        <authorList>
            <person name="Zhang Y."/>
            <person name="Su J."/>
            <person name="Yu J."/>
            <person name="Bu X."/>
            <person name="Ren T."/>
            <person name="Liu X."/>
            <person name="Yao L."/>
        </authorList>
    </citation>
    <scope>FUNCTION IN OSTEOBLAST DIFFERENTIATION AND CHONDROCYTE MATURATION VIA ACTIVATION OF RUNX2</scope>
</reference>
<reference key="15">
    <citation type="journal article" date="2006" name="Cell. Signal.">
        <title>Sensing extracellular matrix: an update on discoidin domain receptor function.</title>
        <authorList>
            <person name="Vogel W.F."/>
            <person name="Abdulhussein R."/>
            <person name="Ford C.E."/>
        </authorList>
    </citation>
    <scope>REVIEW</scope>
</reference>
<reference key="16">
    <citation type="journal article" date="2011" name="Annu. Rev. Cell Dev. Biol.">
        <title>Transmembrane collagen receptors.</title>
        <authorList>
            <person name="Leitinger B."/>
        </authorList>
    </citation>
    <scope>REVIEW</scope>
</reference>
<reference key="17">
    <citation type="journal article" date="2007" name="EMBO J.">
        <title>Structural basis of the collagen-binding mode of discoidin domain receptor 2.</title>
        <authorList>
            <person name="Ichikawa O."/>
            <person name="Osawa M."/>
            <person name="Nishida N."/>
            <person name="Goshima N."/>
            <person name="Nomura N."/>
            <person name="Shimada I."/>
        </authorList>
    </citation>
    <scope>STRUCTURE BY NMR OF 22-186</scope>
    <scope>INTERACTION WITH COLLAGEN</scope>
    <scope>DISULFIDE BONDS</scope>
</reference>
<reference key="18">
    <citation type="journal article" date="2009" name="Structure">
        <title>Crystallographic insight into collagen recognition by discoidin domain receptor 2.</title>
        <authorList>
            <person name="Carafoli F."/>
            <person name="Bihan D."/>
            <person name="Stathopoulos S."/>
            <person name="Konitsiotis A.D."/>
            <person name="Kvansakul M."/>
            <person name="Farndale R.W."/>
            <person name="Leitinger B."/>
            <person name="Hohenester E."/>
        </authorList>
    </citation>
    <scope>X-RAY CRYSTALLOGRAPHY (1.6 ANGSTROMS) OF 26-190 IN COMPLEX WITH COLLAGEN PEPTIDE</scope>
    <scope>DISULFIDE BONDS</scope>
    <scope>MUTAGENESIS OF TRP-52</scope>
    <scope>FUNCTION IN COLLAGEN BINDING</scope>
    <scope>CATALYTIC ACTIVITY</scope>
    <scope>PHOSPHORYLATION</scope>
</reference>
<reference key="19">
    <citation type="journal article" date="2005" name="Cancer Res.">
        <title>Somatic mutations of the protein kinase gene family in human lung cancer.</title>
        <authorList>
            <person name="Davies H."/>
            <person name="Hunter C."/>
            <person name="Smith R."/>
            <person name="Stephens P."/>
            <person name="Greenman C."/>
            <person name="Bignell G."/>
            <person name="Teague J."/>
            <person name="Butler A."/>
            <person name="Edkins S."/>
            <person name="Stevens C."/>
            <person name="Parker A."/>
            <person name="O'Meara S."/>
            <person name="Avis T."/>
            <person name="Barthorpe S."/>
            <person name="Brackenbury L."/>
            <person name="Buck G."/>
            <person name="Clements J."/>
            <person name="Cole J."/>
            <person name="Dicks E."/>
            <person name="Edwards K."/>
            <person name="Forbes S."/>
            <person name="Gorton M."/>
            <person name="Gray K."/>
            <person name="Halliday K."/>
            <person name="Harrison R."/>
            <person name="Hills K."/>
            <person name="Hinton J."/>
            <person name="Jones D."/>
            <person name="Kosmidou V."/>
            <person name="Laman R."/>
            <person name="Lugg R."/>
            <person name="Menzies A."/>
            <person name="Perry J."/>
            <person name="Petty R."/>
            <person name="Raine K."/>
            <person name="Shepherd R."/>
            <person name="Small A."/>
            <person name="Solomon H."/>
            <person name="Stephens Y."/>
            <person name="Tofts C."/>
            <person name="Varian J."/>
            <person name="Webb A."/>
            <person name="West S."/>
            <person name="Widaa S."/>
            <person name="Yates A."/>
            <person name="Brasseur F."/>
            <person name="Cooper C.S."/>
            <person name="Flanagan A.M."/>
            <person name="Green A."/>
            <person name="Knowles M."/>
            <person name="Leung S.Y."/>
            <person name="Looijenga L.H."/>
            <person name="Malkowicz B."/>
            <person name="Pierotti M.A."/>
            <person name="Teh B.T."/>
            <person name="Yuen S.T."/>
            <person name="Lakhani S.R."/>
            <person name="Easton D.F."/>
            <person name="Weber B.L."/>
            <person name="Goldstraw P."/>
            <person name="Nicholson A.G."/>
            <person name="Wooster R."/>
            <person name="Stratton M.R."/>
            <person name="Futreal P.A."/>
        </authorList>
    </citation>
    <scope>VARIANT [LARGE SCALE ANALYSIS] SER-105</scope>
</reference>
<reference key="20">
    <citation type="journal article" date="2007" name="Nature">
        <title>Patterns of somatic mutation in human cancer genomes.</title>
        <authorList>
            <person name="Greenman C."/>
            <person name="Stephens P."/>
            <person name="Smith R."/>
            <person name="Dalgliesh G.L."/>
            <person name="Hunter C."/>
            <person name="Bignell G."/>
            <person name="Davies H."/>
            <person name="Teague J."/>
            <person name="Butler A."/>
            <person name="Stevens C."/>
            <person name="Edkins S."/>
            <person name="O'Meara S."/>
            <person name="Vastrik I."/>
            <person name="Schmidt E.E."/>
            <person name="Avis T."/>
            <person name="Barthorpe S."/>
            <person name="Bhamra G."/>
            <person name="Buck G."/>
            <person name="Choudhury B."/>
            <person name="Clements J."/>
            <person name="Cole J."/>
            <person name="Dicks E."/>
            <person name="Forbes S."/>
            <person name="Gray K."/>
            <person name="Halliday K."/>
            <person name="Harrison R."/>
            <person name="Hills K."/>
            <person name="Hinton J."/>
            <person name="Jenkinson A."/>
            <person name="Jones D."/>
            <person name="Menzies A."/>
            <person name="Mironenko T."/>
            <person name="Perry J."/>
            <person name="Raine K."/>
            <person name="Richardson D."/>
            <person name="Shepherd R."/>
            <person name="Small A."/>
            <person name="Tofts C."/>
            <person name="Varian J."/>
            <person name="Webb T."/>
            <person name="West S."/>
            <person name="Widaa S."/>
            <person name="Yates A."/>
            <person name="Cahill D.P."/>
            <person name="Louis D.N."/>
            <person name="Goldstraw P."/>
            <person name="Nicholson A.G."/>
            <person name="Brasseur F."/>
            <person name="Looijenga L."/>
            <person name="Weber B.L."/>
            <person name="Chiew Y.-E."/>
            <person name="DeFazio A."/>
            <person name="Greaves M.F."/>
            <person name="Green A.R."/>
            <person name="Campbell P."/>
            <person name="Birney E."/>
            <person name="Easton D.F."/>
            <person name="Chenevix-Trench G."/>
            <person name="Tan M.-H."/>
            <person name="Khoo S.K."/>
            <person name="Teh B.T."/>
            <person name="Yuen S.T."/>
            <person name="Leung S.Y."/>
            <person name="Wooster R."/>
            <person name="Futreal P.A."/>
            <person name="Stratton M.R."/>
        </authorList>
    </citation>
    <scope>VARIANTS [LARGE SCALE ANALYSIS] SER-105; ILE-441; CYS-478 AND PHE-543</scope>
</reference>
<reference key="21">
    <citation type="journal article" date="2009" name="Am. J. Hum. Genet.">
        <title>Mutations in DDR2 gene cause SMED with short limbs and abnormal calcifications.</title>
        <authorList>
            <person name="Bargal R."/>
            <person name="Cormier-Daire V."/>
            <person name="Ben-Neriah Z."/>
            <person name="Le Merrer M."/>
            <person name="Sosna J."/>
            <person name="Melki J."/>
            <person name="Zangen D.H."/>
            <person name="Smithson S.F."/>
            <person name="Borochowitz Z."/>
            <person name="Belostotsky R."/>
            <person name="Raas-Rothschild A."/>
        </authorList>
    </citation>
    <scope>VARIANTS SEMD-SL ILE-713; ARG-726 AND CYS-752</scope>
</reference>
<reference key="22">
    <citation type="journal article" date="2010" name="Hum. Mol. Genet.">
        <title>Trafficking defects and loss of ligand binding are the underlying causes of all reported DDR2 missense mutations found in SMED-SL patients.</title>
        <authorList>
            <person name="Ali B.R."/>
            <person name="Xu H."/>
            <person name="Akawi N.A."/>
            <person name="John A."/>
            <person name="Karuvantevida N.S."/>
            <person name="Langer R."/>
            <person name="Al-Gazali L."/>
            <person name="Leitinger B."/>
        </authorList>
    </citation>
    <scope>VARIANT SEMD-SL LYS-113</scope>
    <scope>CHARACTERIZATION OF VARIANTS SEMD-SL LYS-113; ILE-713; ARG-726 AND CYS-752</scope>
    <scope>MUTAGENESIS OF TRP-52</scope>
    <scope>GLYCOSYLATION</scope>
    <scope>SUBCELLULAR LOCATION</scope>
</reference>
<reference key="23">
    <citation type="journal article" date="2016" name="Am. J. Med. Genet. A">
        <title>Novel DDR2 mutation identified by whole exome sequencing in a Moroccan patient with spondylo-meta-epiphyseal dysplasia, short limb-abnormal calcification type.</title>
        <authorList>
            <person name="Mansouri M."/>
            <person name="Kayserili H."/>
            <person name="Elalaoui S.C."/>
            <person name="Nishimura G."/>
            <person name="Iida A."/>
            <person name="Lyahyai J."/>
            <person name="Miyake N."/>
            <person name="Matsumoto N."/>
            <person name="Sefiani A."/>
            <person name="Ikegawa S."/>
        </authorList>
    </citation>
    <scope>VARIANT SEMD-SL TRP-124</scope>
</reference>
<reference key="24">
    <citation type="journal article" date="2018" name="Am. J. Hum. Genet.">
        <title>Recurrent, activating variants in the receptor tyrosine kinase DDR2 cause Warburg-Cinotti syndrome.</title>
        <authorList>
            <person name="Xu L."/>
            <person name="Jensen H."/>
            <person name="Johnston J.J."/>
            <person name="Di Maria E."/>
            <person name="Kloth K."/>
            <person name="Cristea I."/>
            <person name="Sapp J.C."/>
            <person name="Darling T.N."/>
            <person name="Huryn L.A."/>
            <person name="Tranebjaerg L."/>
            <person name="Cinotti E."/>
            <person name="Kubisch C."/>
            <person name="Roedahl E."/>
            <person name="Bruland O."/>
            <person name="Biesecker L.G."/>
            <person name="Houge G."/>
            <person name="Bredrup C."/>
        </authorList>
    </citation>
    <scope>VARIANTS WRCN PRO-610 AND CYS-740</scope>
    <scope>CHARACTERIZATION OF VARIANTS WRCN PRO-610 AND CYS-740</scope>
    <scope>FUNCTION</scope>
    <scope>INVOLVEMENT IN WRCN</scope>
</reference>
<evidence type="ECO:0000250" key="1">
    <source>
        <dbReference type="UniProtKB" id="Q62371"/>
    </source>
</evidence>
<evidence type="ECO:0000255" key="2"/>
<evidence type="ECO:0000255" key="3">
    <source>
        <dbReference type="PROSITE-ProRule" id="PRU00081"/>
    </source>
</evidence>
<evidence type="ECO:0000255" key="4">
    <source>
        <dbReference type="PROSITE-ProRule" id="PRU00159"/>
    </source>
</evidence>
<evidence type="ECO:0000255" key="5">
    <source>
        <dbReference type="PROSITE-ProRule" id="PRU10028"/>
    </source>
</evidence>
<evidence type="ECO:0000256" key="6">
    <source>
        <dbReference type="SAM" id="MobiDB-lite"/>
    </source>
</evidence>
<evidence type="ECO:0000269" key="7">
    <source>
    </source>
</evidence>
<evidence type="ECO:0000269" key="8">
    <source>
    </source>
</evidence>
<evidence type="ECO:0000269" key="9">
    <source>
    </source>
</evidence>
<evidence type="ECO:0000269" key="10">
    <source>
    </source>
</evidence>
<evidence type="ECO:0000269" key="11">
    <source>
    </source>
</evidence>
<evidence type="ECO:0000269" key="12">
    <source>
    </source>
</evidence>
<evidence type="ECO:0000269" key="13">
    <source>
    </source>
</evidence>
<evidence type="ECO:0000269" key="14">
    <source>
    </source>
</evidence>
<evidence type="ECO:0000269" key="15">
    <source>
    </source>
</evidence>
<evidence type="ECO:0000269" key="16">
    <source>
    </source>
</evidence>
<evidence type="ECO:0000269" key="17">
    <source>
    </source>
</evidence>
<evidence type="ECO:0000269" key="18">
    <source>
    </source>
</evidence>
<evidence type="ECO:0000269" key="19">
    <source>
    </source>
</evidence>
<evidence type="ECO:0000269" key="20">
    <source>
    </source>
</evidence>
<evidence type="ECO:0000269" key="21">
    <source>
    </source>
</evidence>
<evidence type="ECO:0000269" key="22">
    <source>
    </source>
</evidence>
<evidence type="ECO:0000305" key="23"/>
<evidence type="ECO:0007829" key="24">
    <source>
        <dbReference type="PDB" id="2WUH"/>
    </source>
</evidence>
<evidence type="ECO:0007829" key="25">
    <source>
        <dbReference type="PDB" id="2Z4F"/>
    </source>
</evidence>
<evidence type="ECO:0007829" key="26">
    <source>
        <dbReference type="PDB" id="6FER"/>
    </source>
</evidence>
<evidence type="ECO:0007829" key="27">
    <source>
        <dbReference type="PDB" id="7AZB"/>
    </source>
</evidence>
<accession>Q16832</accession>
<accession>Q7Z730</accession>
<proteinExistence type="evidence at protein level"/>
<protein>
    <recommendedName>
        <fullName>Discoidin domain-containing receptor 2</fullName>
        <shortName>Discoidin domain receptor 2</shortName>
        <ecNumber>2.7.10.1</ecNumber>
    </recommendedName>
    <alternativeName>
        <fullName>CD167 antigen-like family member B</fullName>
    </alternativeName>
    <alternativeName>
        <fullName>Discoidin domain-containing receptor tyrosine kinase 2</fullName>
    </alternativeName>
    <alternativeName>
        <fullName>Neurotrophic tyrosine kinase, receptor-related 3</fullName>
    </alternativeName>
    <alternativeName>
        <fullName>Receptor protein-tyrosine kinase TKT</fullName>
    </alternativeName>
    <alternativeName>
        <fullName>Tyrosine-protein kinase TYRO10</fullName>
    </alternativeName>
    <cdAntigenName>CD167b</cdAntigenName>
</protein>